<evidence type="ECO:0000255" key="1">
    <source>
        <dbReference type="PROSITE-ProRule" id="PRU00253"/>
    </source>
</evidence>
<evidence type="ECO:0000305" key="2"/>
<accession>P25545</accession>
<dbReference type="EMBL" id="Z22705">
    <property type="protein sequence ID" value="CAA80406.1"/>
    <property type="molecule type" value="Genomic_DNA"/>
</dbReference>
<dbReference type="EMBL" id="X17252">
    <property type="status" value="NOT_ANNOTATED_CDS"/>
    <property type="molecule type" value="Genomic_DNA"/>
</dbReference>
<dbReference type="PIR" id="A36925">
    <property type="entry name" value="A36925"/>
</dbReference>
<dbReference type="SMR" id="P25545"/>
<dbReference type="GO" id="GO:0003700">
    <property type="term" value="F:DNA-binding transcription factor activity"/>
    <property type="evidence" value="ECO:0007669"/>
    <property type="project" value="InterPro"/>
</dbReference>
<dbReference type="GO" id="GO:0000976">
    <property type="term" value="F:transcription cis-regulatory region binding"/>
    <property type="evidence" value="ECO:0007669"/>
    <property type="project" value="TreeGrafter"/>
</dbReference>
<dbReference type="CDD" id="cd08419">
    <property type="entry name" value="PBP2_CbbR_RubisCO_like"/>
    <property type="match status" value="1"/>
</dbReference>
<dbReference type="Gene3D" id="3.40.190.290">
    <property type="match status" value="1"/>
</dbReference>
<dbReference type="Gene3D" id="1.10.10.10">
    <property type="entry name" value="Winged helix-like DNA-binding domain superfamily/Winged helix DNA-binding domain"/>
    <property type="match status" value="1"/>
</dbReference>
<dbReference type="InterPro" id="IPR005119">
    <property type="entry name" value="LysR_subst-bd"/>
</dbReference>
<dbReference type="InterPro" id="IPR000847">
    <property type="entry name" value="Tscrpt_reg_HTH_LysR"/>
</dbReference>
<dbReference type="InterPro" id="IPR036388">
    <property type="entry name" value="WH-like_DNA-bd_sf"/>
</dbReference>
<dbReference type="InterPro" id="IPR036390">
    <property type="entry name" value="WH_DNA-bd_sf"/>
</dbReference>
<dbReference type="PANTHER" id="PTHR30126:SF5">
    <property type="entry name" value="HTH-TYPE TRANSCRIPTIONAL ACTIVATOR CMPR"/>
    <property type="match status" value="1"/>
</dbReference>
<dbReference type="PANTHER" id="PTHR30126">
    <property type="entry name" value="HTH-TYPE TRANSCRIPTIONAL REGULATOR"/>
    <property type="match status" value="1"/>
</dbReference>
<dbReference type="Pfam" id="PF00126">
    <property type="entry name" value="HTH_1"/>
    <property type="match status" value="1"/>
</dbReference>
<dbReference type="Pfam" id="PF03466">
    <property type="entry name" value="LysR_substrate"/>
    <property type="match status" value="1"/>
</dbReference>
<dbReference type="PRINTS" id="PR00039">
    <property type="entry name" value="HTHLYSR"/>
</dbReference>
<dbReference type="SUPFAM" id="SSF53850">
    <property type="entry name" value="Periplasmic binding protein-like II"/>
    <property type="match status" value="1"/>
</dbReference>
<dbReference type="SUPFAM" id="SSF46785">
    <property type="entry name" value="Winged helix' DNA-binding domain"/>
    <property type="match status" value="1"/>
</dbReference>
<dbReference type="PROSITE" id="PS50931">
    <property type="entry name" value="HTH_LYSR"/>
    <property type="match status" value="1"/>
</dbReference>
<feature type="chain" id="PRO_0000105608" description="HTH-type transcriptional regulator CbbR">
    <location>
        <begin position="1"/>
        <end position="333"/>
    </location>
</feature>
<feature type="domain" description="HTH lysR-type" evidence="1">
    <location>
        <begin position="5"/>
        <end position="62"/>
    </location>
</feature>
<feature type="DNA-binding region" description="H-T-H motif" evidence="1">
    <location>
        <begin position="22"/>
        <end position="41"/>
    </location>
</feature>
<organism>
    <name type="scientific">Xanthobacter flavus</name>
    <dbReference type="NCBI Taxonomy" id="281"/>
    <lineage>
        <taxon>Bacteria</taxon>
        <taxon>Pseudomonadati</taxon>
        <taxon>Pseudomonadota</taxon>
        <taxon>Alphaproteobacteria</taxon>
        <taxon>Hyphomicrobiales</taxon>
        <taxon>Xanthobacteraceae</taxon>
        <taxon>Xanthobacter</taxon>
    </lineage>
</organism>
<reference key="1">
    <citation type="journal article" date="1993" name="J. Bacteriol.">
        <title>CbbR, a LysR-type transcriptional activator, is required for expression of the autotrophic CO2 fixation enzymes of Xanthobacter flavus.</title>
        <authorList>
            <person name="van den Bergh E."/>
            <person name="Dijkhuizen L."/>
            <person name="Meijer W.G."/>
        </authorList>
    </citation>
    <scope>NUCLEOTIDE SEQUENCE [GENOMIC DNA]</scope>
    <source>
        <strain>H4-14</strain>
    </source>
</reference>
<reference key="2">
    <citation type="journal article" date="1991" name="Mol. Gen. Genet.">
        <title>Identification and organization of carbon dioxide fixation genes in Xanthobacter flavus H4-14.</title>
        <authorList>
            <person name="Meijer W.G."/>
            <person name="Arnberg A.C."/>
            <person name="Enequist H.G."/>
            <person name="Terpstra P."/>
            <person name="Lidstrom M.E."/>
            <person name="Dijkhuizen L."/>
        </authorList>
    </citation>
    <scope>NUCLEOTIDE SEQUENCE [GENOMIC DNA] OF 1-150</scope>
    <source>
        <strain>H4-14</strain>
    </source>
</reference>
<gene>
    <name type="primary">cbbR</name>
    <name type="synonym">cfxO</name>
</gene>
<keyword id="KW-0010">Activator</keyword>
<keyword id="KW-0238">DNA-binding</keyword>
<keyword id="KW-0804">Transcription</keyword>
<keyword id="KW-0805">Transcription regulation</keyword>
<protein>
    <recommendedName>
        <fullName>HTH-type transcriptional regulator CbbR</fullName>
    </recommendedName>
    <alternativeName>
        <fullName>RuBisCO operon transcriptional regulator</fullName>
    </alternativeName>
</protein>
<name>CBBR_XANFL</name>
<sequence length="333" mass="36004">MAPHWTLRQLRLVALAAASGSYAKAAQDMGLSPPAVTAQMKALEEDIGVPMFERVDGRLRPTAAGQELLSAQERIARALSEAERAIAALKSPERGSVVVGVVSTAKYFAPMALAAFRRRRPEIELRLIIGNREDIIRGIVSLDFDVAIMGRPPPALEAETRLIGDHPHIVVAPVDHPLFKRRKRITPADLTRESLLVREPGSGTRILMERVFEEAGAPNPPIAMEIGSNETIKQSVMAGLGLAFISAHTVAAEVADGRLRVLEVEGLPVVRQWLAVRARDKRLLPAGQALMDFLEREGASFLPQMPGGEGGRCYLPDHVSGSTPAKAVARDPV</sequence>
<proteinExistence type="inferred from homology"/>
<comment type="function">
    <text>Transcriptional activator for the cbb operon (cbbLSXFP) for RuBisCO and other Calvin cycle genes. Binds specifically to two binding sites in the cbbR-cbbL intergenic region.</text>
</comment>
<comment type="similarity">
    <text evidence="2">Belongs to the LysR transcriptional regulatory family.</text>
</comment>